<accession>Q65PA2</accession>
<accession>Q62ZP1</accession>
<reference key="1">
    <citation type="journal article" date="2004" name="J. Mol. Microbiol. Biotechnol.">
        <title>The complete genome sequence of Bacillus licheniformis DSM13, an organism with great industrial potential.</title>
        <authorList>
            <person name="Veith B."/>
            <person name="Herzberg C."/>
            <person name="Steckel S."/>
            <person name="Feesche J."/>
            <person name="Maurer K.H."/>
            <person name="Ehrenreich P."/>
            <person name="Baeumer S."/>
            <person name="Henne A."/>
            <person name="Liesegang H."/>
            <person name="Merkl R."/>
            <person name="Ehrenreich A."/>
            <person name="Gottschalk G."/>
        </authorList>
    </citation>
    <scope>NUCLEOTIDE SEQUENCE [LARGE SCALE GENOMIC DNA]</scope>
    <source>
        <strain>ATCC 14580 / DSM 13 / JCM 2505 / CCUG 7422 / NBRC 12200 / NCIMB 9375 / NCTC 10341 / NRRL NRS-1264 / Gibson 46</strain>
    </source>
</reference>
<reference key="2">
    <citation type="journal article" date="2004" name="Genome Biol.">
        <title>Complete genome sequence of the industrial bacterium Bacillus licheniformis and comparisons with closely related Bacillus species.</title>
        <authorList>
            <person name="Rey M.W."/>
            <person name="Ramaiya P."/>
            <person name="Nelson B.A."/>
            <person name="Brody-Karpin S.D."/>
            <person name="Zaretsky E.J."/>
            <person name="Tang M."/>
            <person name="Lopez de Leon A."/>
            <person name="Xiang H."/>
            <person name="Gusti V."/>
            <person name="Clausen I.G."/>
            <person name="Olsen P.B."/>
            <person name="Rasmussen M.D."/>
            <person name="Andersen J.T."/>
            <person name="Joergensen P.L."/>
            <person name="Larsen T.S."/>
            <person name="Sorokin A."/>
            <person name="Bolotin A."/>
            <person name="Lapidus A."/>
            <person name="Galleron N."/>
            <person name="Ehrlich S.D."/>
            <person name="Berka R.M."/>
        </authorList>
    </citation>
    <scope>NUCLEOTIDE SEQUENCE [LARGE SCALE GENOMIC DNA]</scope>
    <source>
        <strain>ATCC 14580 / DSM 13 / JCM 2505 / CCUG 7422 / NBRC 12200 / NCIMB 9375 / NCTC 10341 / NRRL NRS-1264 / Gibson 46</strain>
    </source>
</reference>
<organism>
    <name type="scientific">Bacillus licheniformis (strain ATCC 14580 / DSM 13 / JCM 2505 / CCUG 7422 / NBRC 12200 / NCIMB 9375 / NCTC 10341 / NRRL NRS-1264 / Gibson 46)</name>
    <dbReference type="NCBI Taxonomy" id="279010"/>
    <lineage>
        <taxon>Bacteria</taxon>
        <taxon>Bacillati</taxon>
        <taxon>Bacillota</taxon>
        <taxon>Bacilli</taxon>
        <taxon>Bacillales</taxon>
        <taxon>Bacillaceae</taxon>
        <taxon>Bacillus</taxon>
    </lineage>
</organism>
<name>RL22_BACLD</name>
<proteinExistence type="inferred from homology"/>
<dbReference type="EMBL" id="AE017333">
    <property type="protein sequence ID" value="AAU39112.1"/>
    <property type="molecule type" value="Genomic_DNA"/>
</dbReference>
<dbReference type="EMBL" id="CP000002">
    <property type="protein sequence ID" value="AAU21767.1"/>
    <property type="molecule type" value="Genomic_DNA"/>
</dbReference>
<dbReference type="RefSeq" id="WP_003178337.1">
    <property type="nucleotide sequence ID" value="NC_006322.1"/>
</dbReference>
<dbReference type="SMR" id="Q65PA2"/>
<dbReference type="STRING" id="279010.BL01047"/>
<dbReference type="GeneID" id="92858898"/>
<dbReference type="KEGG" id="bld:BLi00138"/>
<dbReference type="KEGG" id="bli:BL01047"/>
<dbReference type="eggNOG" id="COG0091">
    <property type="taxonomic scope" value="Bacteria"/>
</dbReference>
<dbReference type="HOGENOM" id="CLU_083987_3_3_9"/>
<dbReference type="Proteomes" id="UP000000606">
    <property type="component" value="Chromosome"/>
</dbReference>
<dbReference type="GO" id="GO:0022625">
    <property type="term" value="C:cytosolic large ribosomal subunit"/>
    <property type="evidence" value="ECO:0007669"/>
    <property type="project" value="TreeGrafter"/>
</dbReference>
<dbReference type="GO" id="GO:0019843">
    <property type="term" value="F:rRNA binding"/>
    <property type="evidence" value="ECO:0007669"/>
    <property type="project" value="UniProtKB-UniRule"/>
</dbReference>
<dbReference type="GO" id="GO:0003735">
    <property type="term" value="F:structural constituent of ribosome"/>
    <property type="evidence" value="ECO:0007669"/>
    <property type="project" value="InterPro"/>
</dbReference>
<dbReference type="GO" id="GO:0006412">
    <property type="term" value="P:translation"/>
    <property type="evidence" value="ECO:0007669"/>
    <property type="project" value="UniProtKB-UniRule"/>
</dbReference>
<dbReference type="CDD" id="cd00336">
    <property type="entry name" value="Ribosomal_L22"/>
    <property type="match status" value="1"/>
</dbReference>
<dbReference type="FunFam" id="3.90.470.10:FF:000001">
    <property type="entry name" value="50S ribosomal protein L22"/>
    <property type="match status" value="1"/>
</dbReference>
<dbReference type="Gene3D" id="3.90.470.10">
    <property type="entry name" value="Ribosomal protein L22/L17"/>
    <property type="match status" value="1"/>
</dbReference>
<dbReference type="HAMAP" id="MF_01331_B">
    <property type="entry name" value="Ribosomal_uL22_B"/>
    <property type="match status" value="1"/>
</dbReference>
<dbReference type="InterPro" id="IPR001063">
    <property type="entry name" value="Ribosomal_uL22"/>
</dbReference>
<dbReference type="InterPro" id="IPR005727">
    <property type="entry name" value="Ribosomal_uL22_bac/chlpt-type"/>
</dbReference>
<dbReference type="InterPro" id="IPR047867">
    <property type="entry name" value="Ribosomal_uL22_bac/org-type"/>
</dbReference>
<dbReference type="InterPro" id="IPR018260">
    <property type="entry name" value="Ribosomal_uL22_CS"/>
</dbReference>
<dbReference type="InterPro" id="IPR036394">
    <property type="entry name" value="Ribosomal_uL22_sf"/>
</dbReference>
<dbReference type="NCBIfam" id="TIGR01044">
    <property type="entry name" value="rplV_bact"/>
    <property type="match status" value="1"/>
</dbReference>
<dbReference type="PANTHER" id="PTHR13501">
    <property type="entry name" value="CHLOROPLAST 50S RIBOSOMAL PROTEIN L22-RELATED"/>
    <property type="match status" value="1"/>
</dbReference>
<dbReference type="PANTHER" id="PTHR13501:SF8">
    <property type="entry name" value="LARGE RIBOSOMAL SUBUNIT PROTEIN UL22M"/>
    <property type="match status" value="1"/>
</dbReference>
<dbReference type="Pfam" id="PF00237">
    <property type="entry name" value="Ribosomal_L22"/>
    <property type="match status" value="1"/>
</dbReference>
<dbReference type="SUPFAM" id="SSF54843">
    <property type="entry name" value="Ribosomal protein L22"/>
    <property type="match status" value="1"/>
</dbReference>
<dbReference type="PROSITE" id="PS00464">
    <property type="entry name" value="RIBOSOMAL_L22"/>
    <property type="match status" value="1"/>
</dbReference>
<gene>
    <name evidence="1" type="primary">rplV</name>
    <name type="ordered locus">BLi00138</name>
    <name type="ordered locus">BL01047</name>
</gene>
<protein>
    <recommendedName>
        <fullName evidence="1">Large ribosomal subunit protein uL22</fullName>
    </recommendedName>
    <alternativeName>
        <fullName evidence="2">50S ribosomal protein L22</fullName>
    </alternativeName>
</protein>
<keyword id="KW-1185">Reference proteome</keyword>
<keyword id="KW-0687">Ribonucleoprotein</keyword>
<keyword id="KW-0689">Ribosomal protein</keyword>
<keyword id="KW-0694">RNA-binding</keyword>
<keyword id="KW-0699">rRNA-binding</keyword>
<evidence type="ECO:0000255" key="1">
    <source>
        <dbReference type="HAMAP-Rule" id="MF_01331"/>
    </source>
</evidence>
<evidence type="ECO:0000305" key="2"/>
<comment type="function">
    <text evidence="1">This protein binds specifically to 23S rRNA; its binding is stimulated by other ribosomal proteins, e.g. L4, L17, and L20. It is important during the early stages of 50S assembly. It makes multiple contacts with different domains of the 23S rRNA in the assembled 50S subunit and ribosome (By similarity).</text>
</comment>
<comment type="function">
    <text evidence="1">The globular domain of the protein is located near the polypeptide exit tunnel on the outside of the subunit, while an extended beta-hairpin is found that lines the wall of the exit tunnel in the center of the 70S ribosome.</text>
</comment>
<comment type="subunit">
    <text evidence="1">Part of the 50S ribosomal subunit.</text>
</comment>
<comment type="similarity">
    <text evidence="1">Belongs to the universal ribosomal protein uL22 family.</text>
</comment>
<sequence length="114" mass="12599">MQQAKAVARTVRIAPRKARLVMDLIRGKQVGEAVSILNHTPKAASPIIEKVLKSAIANAEHNYEMDANNLVVTQAYVNEGPTLKRFRPRAMGRASQINKRTSHITIVVSEKKEG</sequence>
<feature type="chain" id="PRO_0000243119" description="Large ribosomal subunit protein uL22">
    <location>
        <begin position="1"/>
        <end position="114"/>
    </location>
</feature>